<proteinExistence type="evidence at protein level"/>
<protein>
    <recommendedName>
        <fullName evidence="1">UPF0316 protein SA1727</fullName>
    </recommendedName>
</protein>
<keyword id="KW-1003">Cell membrane</keyword>
<keyword id="KW-0472">Membrane</keyword>
<keyword id="KW-0812">Transmembrane</keyword>
<keyword id="KW-1133">Transmembrane helix</keyword>
<gene>
    <name type="ordered locus">SA1727</name>
</gene>
<organism>
    <name type="scientific">Staphylococcus aureus (strain N315)</name>
    <dbReference type="NCBI Taxonomy" id="158879"/>
    <lineage>
        <taxon>Bacteria</taxon>
        <taxon>Bacillati</taxon>
        <taxon>Bacillota</taxon>
        <taxon>Bacilli</taxon>
        <taxon>Bacillales</taxon>
        <taxon>Staphylococcaceae</taxon>
        <taxon>Staphylococcus</taxon>
    </lineage>
</organism>
<comment type="subcellular location">
    <subcellularLocation>
        <location evidence="1">Cell membrane</location>
        <topology evidence="1">Multi-pass membrane protein</topology>
    </subcellularLocation>
</comment>
<comment type="similarity">
    <text evidence="1">Belongs to the UPF0316 family.</text>
</comment>
<sequence length="200" mass="22955">MSFVTENPWLMVLTIFIINVCYVTFLTMRTILTLKGYRYIAASVSFLEVLVYIVGLGLVMSNLDHIQNIIAYAFGFSIGIIVGMKIEEKLALGYTVVNVTSAEYELDLPNELRNLGYGVTHYAAFGRDGSRMVMQILTPRKYERKLMDTIKNLDPKAFIIAYEPRNIHGGFWTKGIRRRKLKDYEPEELESVVEHEIQSK</sequence>
<accession>P61544</accession>
<accession>Q99SX6</accession>
<reference key="1">
    <citation type="journal article" date="2001" name="Lancet">
        <title>Whole genome sequencing of meticillin-resistant Staphylococcus aureus.</title>
        <authorList>
            <person name="Kuroda M."/>
            <person name="Ohta T."/>
            <person name="Uchiyama I."/>
            <person name="Baba T."/>
            <person name="Yuzawa H."/>
            <person name="Kobayashi I."/>
            <person name="Cui L."/>
            <person name="Oguchi A."/>
            <person name="Aoki K."/>
            <person name="Nagai Y."/>
            <person name="Lian J.-Q."/>
            <person name="Ito T."/>
            <person name="Kanamori M."/>
            <person name="Matsumaru H."/>
            <person name="Maruyama A."/>
            <person name="Murakami H."/>
            <person name="Hosoyama A."/>
            <person name="Mizutani-Ui Y."/>
            <person name="Takahashi N.K."/>
            <person name="Sawano T."/>
            <person name="Inoue R."/>
            <person name="Kaito C."/>
            <person name="Sekimizu K."/>
            <person name="Hirakawa H."/>
            <person name="Kuhara S."/>
            <person name="Goto S."/>
            <person name="Yabuzaki J."/>
            <person name="Kanehisa M."/>
            <person name="Yamashita A."/>
            <person name="Oshima K."/>
            <person name="Furuya K."/>
            <person name="Yoshino C."/>
            <person name="Shiba T."/>
            <person name="Hattori M."/>
            <person name="Ogasawara N."/>
            <person name="Hayashi H."/>
            <person name="Hiramatsu K."/>
        </authorList>
    </citation>
    <scope>NUCLEOTIDE SEQUENCE [LARGE SCALE GENOMIC DNA]</scope>
    <source>
        <strain>N315</strain>
    </source>
</reference>
<reference key="2">
    <citation type="submission" date="2007-10" db="UniProtKB">
        <title>Shotgun proteomic analysis of total and membrane protein extracts of S. aureus strain N315.</title>
        <authorList>
            <person name="Vaezzadeh A.R."/>
            <person name="Deshusses J."/>
            <person name="Lescuyer P."/>
            <person name="Hochstrasser D.F."/>
        </authorList>
    </citation>
    <scope>IDENTIFICATION BY MASS SPECTROMETRY [LARGE SCALE ANALYSIS]</scope>
    <source>
        <strain>N315</strain>
    </source>
</reference>
<name>Y1727_STAAN</name>
<evidence type="ECO:0000255" key="1">
    <source>
        <dbReference type="HAMAP-Rule" id="MF_01515"/>
    </source>
</evidence>
<feature type="chain" id="PRO_0000171952" description="UPF0316 protein SA1727">
    <location>
        <begin position="1"/>
        <end position="200"/>
    </location>
</feature>
<feature type="transmembrane region" description="Helical" evidence="1">
    <location>
        <begin position="8"/>
        <end position="28"/>
    </location>
</feature>
<feature type="transmembrane region" description="Helical" evidence="1">
    <location>
        <begin position="40"/>
        <end position="60"/>
    </location>
</feature>
<feature type="transmembrane region" description="Helical" evidence="1">
    <location>
        <begin position="66"/>
        <end position="86"/>
    </location>
</feature>
<dbReference type="EMBL" id="BA000018">
    <property type="protein sequence ID" value="BAB42997.1"/>
    <property type="molecule type" value="Genomic_DNA"/>
</dbReference>
<dbReference type="PIR" id="F89979">
    <property type="entry name" value="F89979"/>
</dbReference>
<dbReference type="RefSeq" id="WP_000011542.1">
    <property type="nucleotide sequence ID" value="NC_002745.2"/>
</dbReference>
<dbReference type="SMR" id="P61544"/>
<dbReference type="EnsemblBacteria" id="BAB42997">
    <property type="protein sequence ID" value="BAB42997"/>
    <property type="gene ID" value="BAB42997"/>
</dbReference>
<dbReference type="KEGG" id="sau:SA1727"/>
<dbReference type="HOGENOM" id="CLU_106166_1_0_9"/>
<dbReference type="GO" id="GO:0005886">
    <property type="term" value="C:plasma membrane"/>
    <property type="evidence" value="ECO:0007669"/>
    <property type="project" value="UniProtKB-SubCell"/>
</dbReference>
<dbReference type="CDD" id="cd16381">
    <property type="entry name" value="YitT_C_like_1"/>
    <property type="match status" value="1"/>
</dbReference>
<dbReference type="HAMAP" id="MF_01515">
    <property type="entry name" value="UPF0316"/>
    <property type="match status" value="1"/>
</dbReference>
<dbReference type="InterPro" id="IPR019264">
    <property type="entry name" value="DUF2179"/>
</dbReference>
<dbReference type="InterPro" id="IPR044035">
    <property type="entry name" value="DUF5698"/>
</dbReference>
<dbReference type="InterPro" id="IPR022930">
    <property type="entry name" value="UPF0316"/>
</dbReference>
<dbReference type="NCBIfam" id="NF003190">
    <property type="entry name" value="PRK04164.1-1"/>
    <property type="match status" value="1"/>
</dbReference>
<dbReference type="NCBIfam" id="NF003194">
    <property type="entry name" value="PRK04164.1-5"/>
    <property type="match status" value="1"/>
</dbReference>
<dbReference type="PANTHER" id="PTHR40060">
    <property type="entry name" value="UPF0316 PROTEIN YEBE"/>
    <property type="match status" value="1"/>
</dbReference>
<dbReference type="PANTHER" id="PTHR40060:SF1">
    <property type="entry name" value="UPF0316 PROTEIN YEBE"/>
    <property type="match status" value="1"/>
</dbReference>
<dbReference type="Pfam" id="PF10035">
    <property type="entry name" value="DUF2179"/>
    <property type="match status" value="1"/>
</dbReference>
<dbReference type="Pfam" id="PF18955">
    <property type="entry name" value="DUF5698"/>
    <property type="match status" value="1"/>
</dbReference>